<protein>
    <recommendedName>
        <fullName>Mu-theraphotoxin-Hhn2e</fullName>
        <shortName>Mu-TRTX-Hhn2e</shortName>
    </recommendedName>
    <alternativeName>
        <fullName>Hainantoxin-III-12</fullName>
        <shortName>HNTX-III-12</shortName>
    </alternativeName>
</protein>
<dbReference type="EMBL" id="GU292878">
    <property type="protein sequence ID" value="ADB56694.1"/>
    <property type="molecule type" value="mRNA"/>
</dbReference>
<dbReference type="SMR" id="D2Y201"/>
<dbReference type="ArachnoServer" id="AS001829">
    <property type="toxin name" value="mu-theraphotoxin-Hhn2e"/>
</dbReference>
<dbReference type="GO" id="GO:0005576">
    <property type="term" value="C:extracellular region"/>
    <property type="evidence" value="ECO:0007669"/>
    <property type="project" value="UniProtKB-SubCell"/>
</dbReference>
<dbReference type="GO" id="GO:0044231">
    <property type="term" value="C:host cell presynaptic membrane"/>
    <property type="evidence" value="ECO:0007669"/>
    <property type="project" value="UniProtKB-KW"/>
</dbReference>
<dbReference type="GO" id="GO:0008200">
    <property type="term" value="F:ion channel inhibitor activity"/>
    <property type="evidence" value="ECO:0007669"/>
    <property type="project" value="InterPro"/>
</dbReference>
<dbReference type="GO" id="GO:0017080">
    <property type="term" value="F:sodium channel regulator activity"/>
    <property type="evidence" value="ECO:0007669"/>
    <property type="project" value="UniProtKB-KW"/>
</dbReference>
<dbReference type="GO" id="GO:0090729">
    <property type="term" value="F:toxin activity"/>
    <property type="evidence" value="ECO:0007669"/>
    <property type="project" value="UniProtKB-KW"/>
</dbReference>
<dbReference type="InterPro" id="IPR011696">
    <property type="entry name" value="Huwentoxin-1"/>
</dbReference>
<dbReference type="InterPro" id="IPR013140">
    <property type="entry name" value="Huwentoxin_CS1"/>
</dbReference>
<dbReference type="Pfam" id="PF07740">
    <property type="entry name" value="Toxin_12"/>
    <property type="match status" value="1"/>
</dbReference>
<dbReference type="SUPFAM" id="SSF57059">
    <property type="entry name" value="omega toxin-like"/>
    <property type="match status" value="1"/>
</dbReference>
<dbReference type="PROSITE" id="PS60021">
    <property type="entry name" value="HWTX_1"/>
    <property type="match status" value="1"/>
</dbReference>
<organism>
    <name type="scientific">Cyriopagopus hainanus</name>
    <name type="common">Chinese bird spider</name>
    <name type="synonym">Haplopelma hainanum</name>
    <dbReference type="NCBI Taxonomy" id="209901"/>
    <lineage>
        <taxon>Eukaryota</taxon>
        <taxon>Metazoa</taxon>
        <taxon>Ecdysozoa</taxon>
        <taxon>Arthropoda</taxon>
        <taxon>Chelicerata</taxon>
        <taxon>Arachnida</taxon>
        <taxon>Araneae</taxon>
        <taxon>Mygalomorphae</taxon>
        <taxon>Theraphosidae</taxon>
        <taxon>Haplopelma</taxon>
    </lineage>
</organism>
<comment type="function">
    <text evidence="1">Lethal neurotoxin. Selectively blocks tetrodotoxin-sensitive voltage-gated sodium channels (Nav). Does not affect tetrodotoxin-resistant voltage-gated sodium channels or calcium channels (By similarity).</text>
</comment>
<comment type="subunit">
    <text evidence="1">Monomer.</text>
</comment>
<comment type="subcellular location">
    <subcellularLocation>
        <location evidence="1">Secreted</location>
    </subcellularLocation>
</comment>
<comment type="tissue specificity">
    <text>Expressed by the venom gland.</text>
</comment>
<comment type="domain">
    <text evidence="1">The presence of a 'disulfide through disulfide knot' structurally defines this protein as a knottin.</text>
</comment>
<comment type="similarity">
    <text evidence="3">Belongs to the neurotoxin 10 (Hwtx-1) family. 15 (Hntx-3) subfamily.</text>
</comment>
<name>H3L01_CYRHA</name>
<evidence type="ECO:0000250" key="1"/>
<evidence type="ECO:0000255" key="2"/>
<evidence type="ECO:0000305" key="3"/>
<sequence length="83" mass="9165">MKASMFLALAGLVLLFVVGYASESEEKEFPRELLSKIFAVDDFKGEERGCKGFGDSCTPGKNECCPNYACSGKHKWCKVYLGK</sequence>
<accession>D2Y201</accession>
<reference key="1">
    <citation type="journal article" date="2010" name="J. Proteome Res.">
        <title>Molecular diversification of peptide toxins from the tarantula Haplopelma hainanum (Ornithoctonus hainana) venom based on transcriptomic, peptidomic, and genomic analyses.</title>
        <authorList>
            <person name="Tang X."/>
            <person name="Zhang Y."/>
            <person name="Hu W."/>
            <person name="Xu D."/>
            <person name="Tao H."/>
            <person name="Yang X."/>
            <person name="Li Y."/>
            <person name="Jiang L."/>
            <person name="Liang S."/>
        </authorList>
    </citation>
    <scope>NUCLEOTIDE SEQUENCE [LARGE SCALE MRNA]</scope>
    <source>
        <tissue>Venom gland</tissue>
    </source>
</reference>
<keyword id="KW-0027">Amidation</keyword>
<keyword id="KW-1015">Disulfide bond</keyword>
<keyword id="KW-0872">Ion channel impairing toxin</keyword>
<keyword id="KW-0960">Knottin</keyword>
<keyword id="KW-0528">Neurotoxin</keyword>
<keyword id="KW-0638">Presynaptic neurotoxin</keyword>
<keyword id="KW-0964">Secreted</keyword>
<keyword id="KW-0732">Signal</keyword>
<keyword id="KW-0800">Toxin</keyword>
<keyword id="KW-0738">Voltage-gated sodium channel impairing toxin</keyword>
<proteinExistence type="evidence at transcript level"/>
<feature type="signal peptide" evidence="2">
    <location>
        <begin position="1"/>
        <end position="21"/>
    </location>
</feature>
<feature type="propeptide" id="PRO_0000400556" evidence="1">
    <location>
        <begin position="22"/>
        <end position="48"/>
    </location>
</feature>
<feature type="peptide" id="PRO_0000400557" description="Mu-theraphotoxin-Hhn2e">
    <location>
        <begin position="49"/>
        <end position="81"/>
    </location>
</feature>
<feature type="modified residue" description="Leucine amide" evidence="1">
    <location>
        <position position="81"/>
    </location>
</feature>
<feature type="disulfide bond" evidence="1">
    <location>
        <begin position="50"/>
        <end position="65"/>
    </location>
</feature>
<feature type="disulfide bond" evidence="1">
    <location>
        <begin position="57"/>
        <end position="70"/>
    </location>
</feature>
<feature type="disulfide bond" evidence="1">
    <location>
        <begin position="64"/>
        <end position="77"/>
    </location>
</feature>